<gene>
    <name evidence="1" type="primary">rplQ</name>
    <name type="ordered locus">FTH_0257</name>
</gene>
<reference key="1">
    <citation type="journal article" date="2006" name="J. Bacteriol.">
        <title>Chromosome rearrangement and diversification of Francisella tularensis revealed by the type B (OSU18) genome sequence.</title>
        <authorList>
            <person name="Petrosino J.F."/>
            <person name="Xiang Q."/>
            <person name="Karpathy S.E."/>
            <person name="Jiang H."/>
            <person name="Yerrapragada S."/>
            <person name="Liu Y."/>
            <person name="Gioia J."/>
            <person name="Hemphill L."/>
            <person name="Gonzalez A."/>
            <person name="Raghavan T.M."/>
            <person name="Uzman A."/>
            <person name="Fox G.E."/>
            <person name="Highlander S."/>
            <person name="Reichard M."/>
            <person name="Morton R.J."/>
            <person name="Clinkenbeard K.D."/>
            <person name="Weinstock G.M."/>
        </authorList>
    </citation>
    <scope>NUCLEOTIDE SEQUENCE [LARGE SCALE GENOMIC DNA]</scope>
    <source>
        <strain>OSU18</strain>
    </source>
</reference>
<accession>Q0BNQ2</accession>
<feature type="chain" id="PRO_1000055831" description="Large ribosomal subunit protein bL17">
    <location>
        <begin position="1"/>
        <end position="145"/>
    </location>
</feature>
<sequence>MRHRKQGRKFGRTSSHRKAMFKNMSASLINHELIKTTLPKAKELRTIVEPLVTLAKREHKLRQELDTNSNEFKAQSVALRRQAFDFLRNKAAVTKLFEEFGARYAERAGGYTRILKCGYRFGDKAPMAFIELVDRPQVEEAADEE</sequence>
<name>RL17_FRATO</name>
<comment type="subunit">
    <text evidence="1">Part of the 50S ribosomal subunit. Contacts protein L32.</text>
</comment>
<comment type="similarity">
    <text evidence="1">Belongs to the bacterial ribosomal protein bL17 family.</text>
</comment>
<evidence type="ECO:0000255" key="1">
    <source>
        <dbReference type="HAMAP-Rule" id="MF_01368"/>
    </source>
</evidence>
<evidence type="ECO:0000305" key="2"/>
<proteinExistence type="inferred from homology"/>
<dbReference type="EMBL" id="CP000437">
    <property type="protein sequence ID" value="ABI82282.1"/>
    <property type="molecule type" value="Genomic_DNA"/>
</dbReference>
<dbReference type="RefSeq" id="WP_003014382.1">
    <property type="nucleotide sequence ID" value="NC_017463.1"/>
</dbReference>
<dbReference type="SMR" id="Q0BNQ2"/>
<dbReference type="GeneID" id="75264235"/>
<dbReference type="KEGG" id="fth:FTH_0257"/>
<dbReference type="GO" id="GO:0022625">
    <property type="term" value="C:cytosolic large ribosomal subunit"/>
    <property type="evidence" value="ECO:0007669"/>
    <property type="project" value="TreeGrafter"/>
</dbReference>
<dbReference type="GO" id="GO:0003735">
    <property type="term" value="F:structural constituent of ribosome"/>
    <property type="evidence" value="ECO:0007669"/>
    <property type="project" value="InterPro"/>
</dbReference>
<dbReference type="GO" id="GO:0006412">
    <property type="term" value="P:translation"/>
    <property type="evidence" value="ECO:0007669"/>
    <property type="project" value="UniProtKB-UniRule"/>
</dbReference>
<dbReference type="Gene3D" id="3.90.1030.10">
    <property type="entry name" value="Ribosomal protein L17"/>
    <property type="match status" value="1"/>
</dbReference>
<dbReference type="HAMAP" id="MF_01368">
    <property type="entry name" value="Ribosomal_bL17"/>
    <property type="match status" value="1"/>
</dbReference>
<dbReference type="InterPro" id="IPR000456">
    <property type="entry name" value="Ribosomal_bL17"/>
</dbReference>
<dbReference type="InterPro" id="IPR047859">
    <property type="entry name" value="Ribosomal_bL17_CS"/>
</dbReference>
<dbReference type="InterPro" id="IPR036373">
    <property type="entry name" value="Ribosomal_bL17_sf"/>
</dbReference>
<dbReference type="NCBIfam" id="TIGR00059">
    <property type="entry name" value="L17"/>
    <property type="match status" value="1"/>
</dbReference>
<dbReference type="PANTHER" id="PTHR14413:SF16">
    <property type="entry name" value="LARGE RIBOSOMAL SUBUNIT PROTEIN BL17M"/>
    <property type="match status" value="1"/>
</dbReference>
<dbReference type="PANTHER" id="PTHR14413">
    <property type="entry name" value="RIBOSOMAL PROTEIN L17"/>
    <property type="match status" value="1"/>
</dbReference>
<dbReference type="Pfam" id="PF01196">
    <property type="entry name" value="Ribosomal_L17"/>
    <property type="match status" value="1"/>
</dbReference>
<dbReference type="SUPFAM" id="SSF64263">
    <property type="entry name" value="Prokaryotic ribosomal protein L17"/>
    <property type="match status" value="1"/>
</dbReference>
<dbReference type="PROSITE" id="PS01167">
    <property type="entry name" value="RIBOSOMAL_L17"/>
    <property type="match status" value="1"/>
</dbReference>
<keyword id="KW-0687">Ribonucleoprotein</keyword>
<keyword id="KW-0689">Ribosomal protein</keyword>
<organism>
    <name type="scientific">Francisella tularensis subsp. holarctica (strain OSU18)</name>
    <dbReference type="NCBI Taxonomy" id="393011"/>
    <lineage>
        <taxon>Bacteria</taxon>
        <taxon>Pseudomonadati</taxon>
        <taxon>Pseudomonadota</taxon>
        <taxon>Gammaproteobacteria</taxon>
        <taxon>Thiotrichales</taxon>
        <taxon>Francisellaceae</taxon>
        <taxon>Francisella</taxon>
    </lineage>
</organism>
<protein>
    <recommendedName>
        <fullName evidence="1">Large ribosomal subunit protein bL17</fullName>
    </recommendedName>
    <alternativeName>
        <fullName evidence="2">50S ribosomal protein L17</fullName>
    </alternativeName>
</protein>